<accession>Q3JVD8</accession>
<comment type="function">
    <text evidence="1">Heme-dependent dioxygenase that catalyzes the oxidative cleavage of the L-tryptophan (L-Trp) pyrrole ring and converts L-tryptophan to N-formyl-L-kynurenine. Catalyzes the oxidative cleavage of the indole moiety.</text>
</comment>
<comment type="catalytic activity">
    <reaction evidence="1">
        <text>L-tryptophan + O2 = N-formyl-L-kynurenine</text>
        <dbReference type="Rhea" id="RHEA:24536"/>
        <dbReference type="ChEBI" id="CHEBI:15379"/>
        <dbReference type="ChEBI" id="CHEBI:57912"/>
        <dbReference type="ChEBI" id="CHEBI:58629"/>
        <dbReference type="EC" id="1.13.11.11"/>
    </reaction>
</comment>
<comment type="cofactor">
    <cofactor evidence="1">
        <name>heme</name>
        <dbReference type="ChEBI" id="CHEBI:30413"/>
    </cofactor>
    <text evidence="1">Binds 1 heme group per subunit.</text>
</comment>
<comment type="pathway">
    <text evidence="1">Amino-acid degradation; L-tryptophan degradation via kynurenine pathway; L-kynurenine from L-tryptophan: step 1/2.</text>
</comment>
<comment type="subunit">
    <text evidence="1">Homotetramer.</text>
</comment>
<comment type="similarity">
    <text evidence="1">Belongs to the tryptophan 2,3-dioxygenase family.</text>
</comment>
<comment type="sequence caution" evidence="3">
    <conflict type="erroneous initiation">
        <sequence resource="EMBL-CDS" id="ABA49981"/>
    </conflict>
</comment>
<reference key="1">
    <citation type="journal article" date="2010" name="Genome Biol. Evol.">
        <title>Continuing evolution of Burkholderia mallei through genome reduction and large-scale rearrangements.</title>
        <authorList>
            <person name="Losada L."/>
            <person name="Ronning C.M."/>
            <person name="DeShazer D."/>
            <person name="Woods D."/>
            <person name="Fedorova N."/>
            <person name="Kim H.S."/>
            <person name="Shabalina S.A."/>
            <person name="Pearson T.R."/>
            <person name="Brinkac L."/>
            <person name="Tan P."/>
            <person name="Nandi T."/>
            <person name="Crabtree J."/>
            <person name="Badger J."/>
            <person name="Beckstrom-Sternberg S."/>
            <person name="Saqib M."/>
            <person name="Schutzer S.E."/>
            <person name="Keim P."/>
            <person name="Nierman W.C."/>
        </authorList>
    </citation>
    <scope>NUCLEOTIDE SEQUENCE [LARGE SCALE GENOMIC DNA]</scope>
    <source>
        <strain>1710b</strain>
    </source>
</reference>
<keyword id="KW-0223">Dioxygenase</keyword>
<keyword id="KW-0349">Heme</keyword>
<keyword id="KW-0408">Iron</keyword>
<keyword id="KW-0479">Metal-binding</keyword>
<keyword id="KW-0560">Oxidoreductase</keyword>
<keyword id="KW-0823">Tryptophan catabolism</keyword>
<organism>
    <name type="scientific">Burkholderia pseudomallei (strain 1710b)</name>
    <dbReference type="NCBI Taxonomy" id="320372"/>
    <lineage>
        <taxon>Bacteria</taxon>
        <taxon>Pseudomonadati</taxon>
        <taxon>Pseudomonadota</taxon>
        <taxon>Betaproteobacteria</taxon>
        <taxon>Burkholderiales</taxon>
        <taxon>Burkholderiaceae</taxon>
        <taxon>Burkholderia</taxon>
        <taxon>pseudomallei group</taxon>
    </lineage>
</organism>
<evidence type="ECO:0000255" key="1">
    <source>
        <dbReference type="HAMAP-Rule" id="MF_01972"/>
    </source>
</evidence>
<evidence type="ECO:0000256" key="2">
    <source>
        <dbReference type="SAM" id="MobiDB-lite"/>
    </source>
</evidence>
<evidence type="ECO:0000305" key="3"/>
<protein>
    <recommendedName>
        <fullName evidence="1">Tryptophan 2,3-dioxygenase</fullName>
        <shortName evidence="1">TDO</shortName>
        <ecNumber evidence="1">1.13.11.11</ecNumber>
    </recommendedName>
    <alternativeName>
        <fullName evidence="1">Tryptamin 2,3-dioxygenase</fullName>
    </alternativeName>
    <alternativeName>
        <fullName evidence="1">Tryptophan oxygenase</fullName>
        <shortName evidence="1">TO</shortName>
        <shortName evidence="1">TRPO</shortName>
    </alternativeName>
    <alternativeName>
        <fullName evidence="1">Tryptophan pyrrolase</fullName>
    </alternativeName>
    <alternativeName>
        <fullName evidence="1">Tryptophanase</fullName>
    </alternativeName>
</protein>
<gene>
    <name evidence="1" type="primary">kynA</name>
    <name type="ordered locus">BURPS1710b_1053</name>
</gene>
<proteinExistence type="inferred from homology"/>
<dbReference type="EC" id="1.13.11.11" evidence="1"/>
<dbReference type="EMBL" id="CP000124">
    <property type="protein sequence ID" value="ABA49981.1"/>
    <property type="status" value="ALT_INIT"/>
    <property type="molecule type" value="Genomic_DNA"/>
</dbReference>
<dbReference type="RefSeq" id="WP_004530854.1">
    <property type="nucleotide sequence ID" value="NC_007434.1"/>
</dbReference>
<dbReference type="SMR" id="Q3JVD8"/>
<dbReference type="EnsemblBacteria" id="ABA49981">
    <property type="protein sequence ID" value="ABA49981"/>
    <property type="gene ID" value="BURPS1710b_1053"/>
</dbReference>
<dbReference type="GeneID" id="93059352"/>
<dbReference type="KEGG" id="bpm:BURPS1710b_1053"/>
<dbReference type="HOGENOM" id="CLU_063240_0_0_4"/>
<dbReference type="UniPathway" id="UPA00333">
    <property type="reaction ID" value="UER00453"/>
</dbReference>
<dbReference type="Proteomes" id="UP000002700">
    <property type="component" value="Chromosome I"/>
</dbReference>
<dbReference type="GO" id="GO:0020037">
    <property type="term" value="F:heme binding"/>
    <property type="evidence" value="ECO:0000250"/>
    <property type="project" value="UniProtKB"/>
</dbReference>
<dbReference type="GO" id="GO:0046872">
    <property type="term" value="F:metal ion binding"/>
    <property type="evidence" value="ECO:0007669"/>
    <property type="project" value="UniProtKB-KW"/>
</dbReference>
<dbReference type="GO" id="GO:0004833">
    <property type="term" value="F:tryptophan 2,3-dioxygenase activity"/>
    <property type="evidence" value="ECO:0000250"/>
    <property type="project" value="UniProtKB"/>
</dbReference>
<dbReference type="GO" id="GO:0019442">
    <property type="term" value="P:L-tryptophan catabolic process to acetyl-CoA"/>
    <property type="evidence" value="ECO:0007669"/>
    <property type="project" value="TreeGrafter"/>
</dbReference>
<dbReference type="GO" id="GO:0019441">
    <property type="term" value="P:L-tryptophan catabolic process to kynurenine"/>
    <property type="evidence" value="ECO:0000250"/>
    <property type="project" value="UniProtKB"/>
</dbReference>
<dbReference type="FunFam" id="1.20.58.480:FF:000001">
    <property type="entry name" value="Tryptophan 2,3-dioxygenase"/>
    <property type="match status" value="1"/>
</dbReference>
<dbReference type="Gene3D" id="1.20.58.480">
    <property type="match status" value="1"/>
</dbReference>
<dbReference type="HAMAP" id="MF_01972">
    <property type="entry name" value="T23O"/>
    <property type="match status" value="1"/>
</dbReference>
<dbReference type="InterPro" id="IPR037217">
    <property type="entry name" value="Trp/Indoleamine_2_3_dOase-like"/>
</dbReference>
<dbReference type="InterPro" id="IPR017485">
    <property type="entry name" value="Trp_2-3-dOase_bac"/>
</dbReference>
<dbReference type="InterPro" id="IPR004981">
    <property type="entry name" value="Trp_2_3_dOase"/>
</dbReference>
<dbReference type="NCBIfam" id="TIGR03036">
    <property type="entry name" value="trp_2_3_diox"/>
    <property type="match status" value="1"/>
</dbReference>
<dbReference type="PANTHER" id="PTHR10138">
    <property type="entry name" value="TRYPTOPHAN 2,3-DIOXYGENASE"/>
    <property type="match status" value="1"/>
</dbReference>
<dbReference type="PANTHER" id="PTHR10138:SF0">
    <property type="entry name" value="TRYPTOPHAN 2,3-DIOXYGENASE"/>
    <property type="match status" value="1"/>
</dbReference>
<dbReference type="Pfam" id="PF03301">
    <property type="entry name" value="Trp_dioxygenase"/>
    <property type="match status" value="1"/>
</dbReference>
<dbReference type="SUPFAM" id="SSF140959">
    <property type="entry name" value="Indolic compounds 2,3-dioxygenase-like"/>
    <property type="match status" value="1"/>
</dbReference>
<feature type="chain" id="PRO_0000360108" description="Tryptophan 2,3-dioxygenase">
    <location>
        <begin position="1"/>
        <end position="306"/>
    </location>
</feature>
<feature type="region of interest" description="Disordered" evidence="2">
    <location>
        <begin position="1"/>
        <end position="33"/>
    </location>
</feature>
<feature type="binding site" evidence="1">
    <location>
        <begin position="75"/>
        <end position="79"/>
    </location>
    <ligand>
        <name>substrate</name>
    </ligand>
</feature>
<feature type="binding site" evidence="1">
    <location>
        <position position="137"/>
    </location>
    <ligand>
        <name>substrate</name>
    </ligand>
</feature>
<feature type="binding site" evidence="1">
    <location>
        <position position="141"/>
    </location>
    <ligand>
        <name>substrate</name>
    </ligand>
</feature>
<feature type="binding site" description="axial binding residue" evidence="1">
    <location>
        <position position="264"/>
    </location>
    <ligand>
        <name>heme</name>
        <dbReference type="ChEBI" id="CHEBI:30413"/>
    </ligand>
    <ligandPart>
        <name>Fe</name>
        <dbReference type="ChEBI" id="CHEBI:18248"/>
    </ligandPart>
</feature>
<feature type="binding site" evidence="1">
    <location>
        <position position="278"/>
    </location>
    <ligand>
        <name>substrate</name>
    </ligand>
</feature>
<sequence length="306" mass="34813">MQPPGDDAAPRCPFAGAHAPDAPHVPEAAGDDAQAGWHRAQLDFSQSMSYGDYLSLDPILDAQHPRSPDHNEMLFIIQHQTSELWMKLALYELRAALASIRDDALPPAFKMLARVSRVLEQLVQAWNVLATMTPSEYSAMRPYLGASSGFQSYQYRELEFILGNKNAQMLRPHAHRPAIHAHLEASLQAPSLYDEVIRLLARRGFPIAPERLDADWTQPTRHDRTVEAAWLAVYREPNAHWELYEMAEELVDLEDAFRQWRFRHVTTVERIIGFKQGTGGTSGAPYLRKMLDVVLFPELWHVRTTL</sequence>
<name>T23O_BURP1</name>